<organism>
    <name type="scientific">Actinobacillus pleuropneumoniae serotype 5b (strain L20)</name>
    <dbReference type="NCBI Taxonomy" id="416269"/>
    <lineage>
        <taxon>Bacteria</taxon>
        <taxon>Pseudomonadati</taxon>
        <taxon>Pseudomonadota</taxon>
        <taxon>Gammaproteobacteria</taxon>
        <taxon>Pasteurellales</taxon>
        <taxon>Pasteurellaceae</taxon>
        <taxon>Actinobacillus</taxon>
    </lineage>
</organism>
<comment type="function">
    <text evidence="1">Catalyzes the decarboxylation of oxaloacetate coupled to Na(+) translocation.</text>
</comment>
<comment type="catalytic activity">
    <reaction evidence="1">
        <text>oxaloacetate + 2 Na(+)(in) + H(+) = pyruvate + 2 Na(+)(out) + CO2</text>
        <dbReference type="Rhea" id="RHEA:57724"/>
        <dbReference type="ChEBI" id="CHEBI:15361"/>
        <dbReference type="ChEBI" id="CHEBI:15378"/>
        <dbReference type="ChEBI" id="CHEBI:16452"/>
        <dbReference type="ChEBI" id="CHEBI:16526"/>
        <dbReference type="ChEBI" id="CHEBI:29101"/>
        <dbReference type="EC" id="7.2.4.2"/>
    </reaction>
</comment>
<comment type="cofactor">
    <cofactor evidence="1">
        <name>Na(+)</name>
        <dbReference type="ChEBI" id="CHEBI:29101"/>
    </cofactor>
</comment>
<comment type="subunit">
    <text evidence="1">Heterotrimer of an alpha, a beta and a gamma subunit.</text>
</comment>
<comment type="subcellular location">
    <subcellularLocation>
        <location evidence="1">Cell membrane</location>
        <topology evidence="1">Single-pass membrane protein</topology>
    </subcellularLocation>
</comment>
<comment type="similarity">
    <text evidence="1">Belongs to the OadG family.</text>
</comment>
<evidence type="ECO:0000255" key="1">
    <source>
        <dbReference type="HAMAP-Rule" id="MF_00404"/>
    </source>
</evidence>
<proteinExistence type="inferred from homology"/>
<sequence length="85" mass="9280">MTNAELFGEGINLMISGMGFVLLFLIVLIYAISFISTLINKYFPEPIPAPVAKPVPSAVPTDNLDHLRPVIAAAIAHHRRQQGLK</sequence>
<gene>
    <name evidence="1" type="primary">oadG</name>
    <name type="ordered locus">APL_1375</name>
</gene>
<protein>
    <recommendedName>
        <fullName evidence="1">Probable oxaloacetate decarboxylase gamma chain</fullName>
        <ecNumber evidence="1">7.2.4.2</ecNumber>
    </recommendedName>
</protein>
<feature type="chain" id="PRO_1000049820" description="Probable oxaloacetate decarboxylase gamma chain">
    <location>
        <begin position="1"/>
        <end position="85"/>
    </location>
</feature>
<feature type="transmembrane region" description="Helical" evidence="1">
    <location>
        <begin position="15"/>
        <end position="35"/>
    </location>
</feature>
<accession>A3N223</accession>
<keyword id="KW-1003">Cell membrane</keyword>
<keyword id="KW-0406">Ion transport</keyword>
<keyword id="KW-0472">Membrane</keyword>
<keyword id="KW-1185">Reference proteome</keyword>
<keyword id="KW-0915">Sodium</keyword>
<keyword id="KW-0739">Sodium transport</keyword>
<keyword id="KW-1278">Translocase</keyword>
<keyword id="KW-0812">Transmembrane</keyword>
<keyword id="KW-1133">Transmembrane helix</keyword>
<keyword id="KW-0813">Transport</keyword>
<reference key="1">
    <citation type="journal article" date="2008" name="J. Bacteriol.">
        <title>The complete genome sequence of Actinobacillus pleuropneumoniae L20 (serotype 5b).</title>
        <authorList>
            <person name="Foote S.J."/>
            <person name="Bosse J.T."/>
            <person name="Bouevitch A.B."/>
            <person name="Langford P.R."/>
            <person name="Young N.M."/>
            <person name="Nash J.H.E."/>
        </authorList>
    </citation>
    <scope>NUCLEOTIDE SEQUENCE [LARGE SCALE GENOMIC DNA]</scope>
    <source>
        <strain>L20</strain>
    </source>
</reference>
<name>OADG_ACTP2</name>
<dbReference type="EC" id="7.2.4.2" evidence="1"/>
<dbReference type="EMBL" id="CP000569">
    <property type="protein sequence ID" value="ABN74459.1"/>
    <property type="molecule type" value="Genomic_DNA"/>
</dbReference>
<dbReference type="RefSeq" id="WP_005618986.1">
    <property type="nucleotide sequence ID" value="NC_009053.1"/>
</dbReference>
<dbReference type="SMR" id="A3N223"/>
<dbReference type="STRING" id="416269.APL_1375"/>
<dbReference type="EnsemblBacteria" id="ABN74459">
    <property type="protein sequence ID" value="ABN74459"/>
    <property type="gene ID" value="APL_1375"/>
</dbReference>
<dbReference type="KEGG" id="apl:APL_1375"/>
<dbReference type="eggNOG" id="COG3630">
    <property type="taxonomic scope" value="Bacteria"/>
</dbReference>
<dbReference type="HOGENOM" id="CLU_168750_3_2_6"/>
<dbReference type="Proteomes" id="UP000001432">
    <property type="component" value="Chromosome"/>
</dbReference>
<dbReference type="GO" id="GO:0005886">
    <property type="term" value="C:plasma membrane"/>
    <property type="evidence" value="ECO:0007669"/>
    <property type="project" value="UniProtKB-SubCell"/>
</dbReference>
<dbReference type="GO" id="GO:0015451">
    <property type="term" value="F:decarboxylation-driven active transmembrane transporter activity"/>
    <property type="evidence" value="ECO:0007669"/>
    <property type="project" value="UniProtKB-EC"/>
</dbReference>
<dbReference type="GO" id="GO:0008948">
    <property type="term" value="F:oxaloacetate decarboxylase activity"/>
    <property type="evidence" value="ECO:0007669"/>
    <property type="project" value="UniProtKB-UniRule"/>
</dbReference>
<dbReference type="GO" id="GO:0015081">
    <property type="term" value="F:sodium ion transmembrane transporter activity"/>
    <property type="evidence" value="ECO:0007669"/>
    <property type="project" value="UniProtKB-UniRule"/>
</dbReference>
<dbReference type="GO" id="GO:0036376">
    <property type="term" value="P:sodium ion export across plasma membrane"/>
    <property type="evidence" value="ECO:0007669"/>
    <property type="project" value="InterPro"/>
</dbReference>
<dbReference type="HAMAP" id="MF_00404">
    <property type="entry name" value="OadG"/>
    <property type="match status" value="1"/>
</dbReference>
<dbReference type="InterPro" id="IPR005899">
    <property type="entry name" value="Na_pump_deCOase"/>
</dbReference>
<dbReference type="InterPro" id="IPR023424">
    <property type="entry name" value="OadG"/>
</dbReference>
<dbReference type="NCBIfam" id="TIGR01195">
    <property type="entry name" value="oadG_fam"/>
    <property type="match status" value="1"/>
</dbReference>
<dbReference type="NCBIfam" id="NF002792">
    <property type="entry name" value="PRK02919.1"/>
    <property type="match status" value="1"/>
</dbReference>
<dbReference type="Pfam" id="PF04277">
    <property type="entry name" value="OAD_gamma"/>
    <property type="match status" value="1"/>
</dbReference>